<evidence type="ECO:0000250" key="1">
    <source>
        <dbReference type="UniProtKB" id="P55735"/>
    </source>
</evidence>
<evidence type="ECO:0000269" key="2">
    <source>
    </source>
</evidence>
<evidence type="ECO:0000305" key="3"/>
<proteinExistence type="evidence at protein level"/>
<gene>
    <name type="primary">Sec13</name>
    <name type="synonym">Sec13l1</name>
</gene>
<comment type="function">
    <text evidence="1 2">Functions as a component of the nuclear pore complex (NPC) and the COPII coat (By similarity). At the endoplasmic reticulum, SEC13 is involved in the biogenesis of COPII-coated vesicles. Required for the exit of adipsin (CFD/ADN), an adipocyte-secreted protein from the endoplasmic reticulum (PubMed:27354378).</text>
</comment>
<comment type="function">
    <text evidence="1">As a component of the GATOR2 complex, functions as an activator of the amino acid-sensing branch of the mTORC1 signaling pathway. The GATOR2 complex indirectly activates mTORC1 through the inhibition of the GATOR1 subcomplex. GATOR2 probably acts as an E3 ubiquitin-protein ligase toward GATOR1. In the presence of abundant amino acids, the GATOR2 complex mediates ubiquitination of the NPRL2 core component of the GATOR1 complex, leading to GATOR1 inactivation. In the absence of amino acids, GATOR2 is inhibited, activating the GATOR1 complex. Within the GATOR2 complex, SEC13 and SEH1L are required to stabilize the complex.</text>
</comment>
<comment type="activity regulation">
    <text evidence="1">The GATOR2 complex is negatively regulated by the upstream amino acid sensors CASTOR1 and SESN2, which sequester the GATOR2 complex in absence of amino acids. In the presence of abundant amino acids, GATOR2 is released from CASTOR1 and SESN2 and activated.</text>
</comment>
<comment type="subunit">
    <text evidence="1">At the nuclear pore: component of the Y-shaped Nup107-160 subcomplex of the nuclear pore complex (NPC). The Nup107-160 subcomplex includes NUP160, NUP133, NUP107, NUP98, NUP85, NUP43, NUP37, SEH1 and SEC13. At the COPII coat complex: interacts with SEC31A and SEC31B. Interacts with SEC16A. Interacts with SEC16B. Component of the GATOR2 subcomplex, composed of MIOS, SEC13, SEH1L, WDR24 and WDR59. The GATOR2 complex interacts with CASTOR1 and CASTOR2; the interaction is negatively regulated by arginine. The GATOR2 complex interacts with SESN1, SESN2 and SESN3; the interaction is negatively regulated by amino acids.</text>
</comment>
<comment type="subcellular location">
    <subcellularLocation>
        <location evidence="1">Cytoplasmic vesicle</location>
        <location evidence="1">COPII-coated vesicle membrane</location>
        <topology evidence="1">Peripheral membrane protein</topology>
        <orientation evidence="1">Cytoplasmic side</orientation>
    </subcellularLocation>
    <subcellularLocation>
        <location evidence="1">Endoplasmic reticulum membrane</location>
        <topology evidence="1">Peripheral membrane protein</topology>
        <orientation evidence="1">Cytoplasmic side</orientation>
    </subcellularLocation>
    <subcellularLocation>
        <location evidence="1">Nucleus</location>
        <location evidence="1">Nuclear pore complex</location>
    </subcellularLocation>
    <subcellularLocation>
        <location evidence="1">Lysosome membrane</location>
    </subcellularLocation>
    <text evidence="1">In interphase, localizes at both sides of the NPC.</text>
</comment>
<comment type="similarity">
    <text evidence="3">Belongs to the WD repeat SEC13 family.</text>
</comment>
<name>SEC13_MOUSE</name>
<feature type="initiator methionine" description="Removed" evidence="1">
    <location>
        <position position="1"/>
    </location>
</feature>
<feature type="chain" id="PRO_0000051204" description="Protein SEC13 homolog">
    <location>
        <begin position="2"/>
        <end position="322"/>
    </location>
</feature>
<feature type="repeat" description="WD 1">
    <location>
        <begin position="11"/>
        <end position="50"/>
    </location>
</feature>
<feature type="repeat" description="WD 2">
    <location>
        <begin position="55"/>
        <end position="96"/>
    </location>
</feature>
<feature type="repeat" description="WD 3">
    <location>
        <begin position="101"/>
        <end position="144"/>
    </location>
</feature>
<feature type="repeat" description="WD 4">
    <location>
        <begin position="148"/>
        <end position="204"/>
    </location>
</feature>
<feature type="repeat" description="WD 5">
    <location>
        <begin position="210"/>
        <end position="253"/>
    </location>
</feature>
<feature type="repeat" description="WD 6">
    <location>
        <begin position="260"/>
        <end position="299"/>
    </location>
</feature>
<feature type="modified residue" description="N-acetylvaline" evidence="1">
    <location>
        <position position="2"/>
    </location>
</feature>
<feature type="modified residue" description="Phosphoserine" evidence="1">
    <location>
        <position position="184"/>
    </location>
</feature>
<feature type="modified residue" description="Phosphoserine" evidence="1">
    <location>
        <position position="309"/>
    </location>
</feature>
<feature type="sequence conflict" description="In Ref. 1; BAB26480." evidence="3" ref="1">
    <original>D</original>
    <variation>H</variation>
    <location>
        <position position="41"/>
    </location>
</feature>
<feature type="sequence conflict" description="In Ref. 2; AAH02128." evidence="3" ref="2">
    <original>V</original>
    <variation>G</variation>
    <location>
        <position position="298"/>
    </location>
</feature>
<reference key="1">
    <citation type="journal article" date="2005" name="Science">
        <title>The transcriptional landscape of the mammalian genome.</title>
        <authorList>
            <person name="Carninci P."/>
            <person name="Kasukawa T."/>
            <person name="Katayama S."/>
            <person name="Gough J."/>
            <person name="Frith M.C."/>
            <person name="Maeda N."/>
            <person name="Oyama R."/>
            <person name="Ravasi T."/>
            <person name="Lenhard B."/>
            <person name="Wells C."/>
            <person name="Kodzius R."/>
            <person name="Shimokawa K."/>
            <person name="Bajic V.B."/>
            <person name="Brenner S.E."/>
            <person name="Batalov S."/>
            <person name="Forrest A.R."/>
            <person name="Zavolan M."/>
            <person name="Davis M.J."/>
            <person name="Wilming L.G."/>
            <person name="Aidinis V."/>
            <person name="Allen J.E."/>
            <person name="Ambesi-Impiombato A."/>
            <person name="Apweiler R."/>
            <person name="Aturaliya R.N."/>
            <person name="Bailey T.L."/>
            <person name="Bansal M."/>
            <person name="Baxter L."/>
            <person name="Beisel K.W."/>
            <person name="Bersano T."/>
            <person name="Bono H."/>
            <person name="Chalk A.M."/>
            <person name="Chiu K.P."/>
            <person name="Choudhary V."/>
            <person name="Christoffels A."/>
            <person name="Clutterbuck D.R."/>
            <person name="Crowe M.L."/>
            <person name="Dalla E."/>
            <person name="Dalrymple B.P."/>
            <person name="de Bono B."/>
            <person name="Della Gatta G."/>
            <person name="di Bernardo D."/>
            <person name="Down T."/>
            <person name="Engstrom P."/>
            <person name="Fagiolini M."/>
            <person name="Faulkner G."/>
            <person name="Fletcher C.F."/>
            <person name="Fukushima T."/>
            <person name="Furuno M."/>
            <person name="Futaki S."/>
            <person name="Gariboldi M."/>
            <person name="Georgii-Hemming P."/>
            <person name="Gingeras T.R."/>
            <person name="Gojobori T."/>
            <person name="Green R.E."/>
            <person name="Gustincich S."/>
            <person name="Harbers M."/>
            <person name="Hayashi Y."/>
            <person name="Hensch T.K."/>
            <person name="Hirokawa N."/>
            <person name="Hill D."/>
            <person name="Huminiecki L."/>
            <person name="Iacono M."/>
            <person name="Ikeo K."/>
            <person name="Iwama A."/>
            <person name="Ishikawa T."/>
            <person name="Jakt M."/>
            <person name="Kanapin A."/>
            <person name="Katoh M."/>
            <person name="Kawasawa Y."/>
            <person name="Kelso J."/>
            <person name="Kitamura H."/>
            <person name="Kitano H."/>
            <person name="Kollias G."/>
            <person name="Krishnan S.P."/>
            <person name="Kruger A."/>
            <person name="Kummerfeld S.K."/>
            <person name="Kurochkin I.V."/>
            <person name="Lareau L.F."/>
            <person name="Lazarevic D."/>
            <person name="Lipovich L."/>
            <person name="Liu J."/>
            <person name="Liuni S."/>
            <person name="McWilliam S."/>
            <person name="Madan Babu M."/>
            <person name="Madera M."/>
            <person name="Marchionni L."/>
            <person name="Matsuda H."/>
            <person name="Matsuzawa S."/>
            <person name="Miki H."/>
            <person name="Mignone F."/>
            <person name="Miyake S."/>
            <person name="Morris K."/>
            <person name="Mottagui-Tabar S."/>
            <person name="Mulder N."/>
            <person name="Nakano N."/>
            <person name="Nakauchi H."/>
            <person name="Ng P."/>
            <person name="Nilsson R."/>
            <person name="Nishiguchi S."/>
            <person name="Nishikawa S."/>
            <person name="Nori F."/>
            <person name="Ohara O."/>
            <person name="Okazaki Y."/>
            <person name="Orlando V."/>
            <person name="Pang K.C."/>
            <person name="Pavan W.J."/>
            <person name="Pavesi G."/>
            <person name="Pesole G."/>
            <person name="Petrovsky N."/>
            <person name="Piazza S."/>
            <person name="Reed J."/>
            <person name="Reid J.F."/>
            <person name="Ring B.Z."/>
            <person name="Ringwald M."/>
            <person name="Rost B."/>
            <person name="Ruan Y."/>
            <person name="Salzberg S.L."/>
            <person name="Sandelin A."/>
            <person name="Schneider C."/>
            <person name="Schoenbach C."/>
            <person name="Sekiguchi K."/>
            <person name="Semple C.A."/>
            <person name="Seno S."/>
            <person name="Sessa L."/>
            <person name="Sheng Y."/>
            <person name="Shibata Y."/>
            <person name="Shimada H."/>
            <person name="Shimada K."/>
            <person name="Silva D."/>
            <person name="Sinclair B."/>
            <person name="Sperling S."/>
            <person name="Stupka E."/>
            <person name="Sugiura K."/>
            <person name="Sultana R."/>
            <person name="Takenaka Y."/>
            <person name="Taki K."/>
            <person name="Tammoja K."/>
            <person name="Tan S.L."/>
            <person name="Tang S."/>
            <person name="Taylor M.S."/>
            <person name="Tegner J."/>
            <person name="Teichmann S.A."/>
            <person name="Ueda H.R."/>
            <person name="van Nimwegen E."/>
            <person name="Verardo R."/>
            <person name="Wei C.L."/>
            <person name="Yagi K."/>
            <person name="Yamanishi H."/>
            <person name="Zabarovsky E."/>
            <person name="Zhu S."/>
            <person name="Zimmer A."/>
            <person name="Hide W."/>
            <person name="Bult C."/>
            <person name="Grimmond S.M."/>
            <person name="Teasdale R.D."/>
            <person name="Liu E.T."/>
            <person name="Brusic V."/>
            <person name="Quackenbush J."/>
            <person name="Wahlestedt C."/>
            <person name="Mattick J.S."/>
            <person name="Hume D.A."/>
            <person name="Kai C."/>
            <person name="Sasaki D."/>
            <person name="Tomaru Y."/>
            <person name="Fukuda S."/>
            <person name="Kanamori-Katayama M."/>
            <person name="Suzuki M."/>
            <person name="Aoki J."/>
            <person name="Arakawa T."/>
            <person name="Iida J."/>
            <person name="Imamura K."/>
            <person name="Itoh M."/>
            <person name="Kato T."/>
            <person name="Kawaji H."/>
            <person name="Kawagashira N."/>
            <person name="Kawashima T."/>
            <person name="Kojima M."/>
            <person name="Kondo S."/>
            <person name="Konno H."/>
            <person name="Nakano K."/>
            <person name="Ninomiya N."/>
            <person name="Nishio T."/>
            <person name="Okada M."/>
            <person name="Plessy C."/>
            <person name="Shibata K."/>
            <person name="Shiraki T."/>
            <person name="Suzuki S."/>
            <person name="Tagami M."/>
            <person name="Waki K."/>
            <person name="Watahiki A."/>
            <person name="Okamura-Oho Y."/>
            <person name="Suzuki H."/>
            <person name="Kawai J."/>
            <person name="Hayashizaki Y."/>
        </authorList>
    </citation>
    <scope>NUCLEOTIDE SEQUENCE [LARGE SCALE MRNA]</scope>
    <source>
        <strain>C57BL/6J</strain>
        <tissue>Tongue</tissue>
    </source>
</reference>
<reference key="2">
    <citation type="journal article" date="2004" name="Genome Res.">
        <title>The status, quality, and expansion of the NIH full-length cDNA project: the Mammalian Gene Collection (MGC).</title>
        <authorList>
            <consortium name="The MGC Project Team"/>
        </authorList>
    </citation>
    <scope>NUCLEOTIDE SEQUENCE [LARGE SCALE MRNA]</scope>
    <source>
        <strain>Czech II</strain>
        <tissue>Mammary tumor</tissue>
    </source>
</reference>
<reference key="3">
    <citation type="journal article" date="2010" name="Cell">
        <title>A tissue-specific atlas of mouse protein phosphorylation and expression.</title>
        <authorList>
            <person name="Huttlin E.L."/>
            <person name="Jedrychowski M.P."/>
            <person name="Elias J.E."/>
            <person name="Goswami T."/>
            <person name="Rad R."/>
            <person name="Beausoleil S.A."/>
            <person name="Villen J."/>
            <person name="Haas W."/>
            <person name="Sowa M.E."/>
            <person name="Gygi S.P."/>
        </authorList>
    </citation>
    <scope>IDENTIFICATION BY MASS SPECTROMETRY [LARGE SCALE ANALYSIS]</scope>
    <source>
        <tissue>Brain</tissue>
        <tissue>Brown adipose tissue</tissue>
        <tissue>Heart</tissue>
        <tissue>Kidney</tissue>
        <tissue>Liver</tissue>
        <tissue>Lung</tissue>
        <tissue>Pancreas</tissue>
        <tissue>Spleen</tissue>
        <tissue>Testis</tissue>
    </source>
</reference>
<reference key="4">
    <citation type="journal article" date="2016" name="J. Cell Biol.">
        <title>SEC16A is a RAB10 effector required for insulin-stimulated GLUT4 trafficking in adipocytes.</title>
        <authorList>
            <person name="Bruno J."/>
            <person name="Brumfield A."/>
            <person name="Chaudhary N."/>
            <person name="Iaea D."/>
            <person name="McGraw T.E."/>
        </authorList>
    </citation>
    <scope>FUNCTION</scope>
</reference>
<keyword id="KW-0007">Acetylation</keyword>
<keyword id="KW-0968">Cytoplasmic vesicle</keyword>
<keyword id="KW-0256">Endoplasmic reticulum</keyword>
<keyword id="KW-0931">ER-Golgi transport</keyword>
<keyword id="KW-0458">Lysosome</keyword>
<keyword id="KW-0472">Membrane</keyword>
<keyword id="KW-0509">mRNA transport</keyword>
<keyword id="KW-0906">Nuclear pore complex</keyword>
<keyword id="KW-0539">Nucleus</keyword>
<keyword id="KW-0597">Phosphoprotein</keyword>
<keyword id="KW-0653">Protein transport</keyword>
<keyword id="KW-1185">Reference proteome</keyword>
<keyword id="KW-0677">Repeat</keyword>
<keyword id="KW-0811">Translocation</keyword>
<keyword id="KW-0813">Transport</keyword>
<keyword id="KW-0853">WD repeat</keyword>
<accession>Q9D1M0</accession>
<accession>Q99M12</accession>
<accession>Q9D712</accession>
<sequence>MVSVMNTVDTSHEDMIHDAQMDYYGTRLATCSSDRSVKIFDVRNGGQILIADLRGHEGPVWQVAWAHPMYGNILASCSYDRKVIIWKEENGTWEKTHEHSGHDSSVNSVCWAPHDYGLILACGSSDGAISLLTYTGEGQWEVKKINNAHTIGCNAVSWAPAVVPGSLIDQPSGQKPNYIKKFASGGCDNLIKLWREEEDGQWKEEQKLEAHSDWVRDVAWAPSIGLPTSTIASCSQDGRVFIWTCDDASGNMWSPKLLHKFNDVVWHVSWSITANILAVSGGDNKVTLWKESVDGQWVCISDVNKGQGSVSASITEGQQNEQ</sequence>
<organism>
    <name type="scientific">Mus musculus</name>
    <name type="common">Mouse</name>
    <dbReference type="NCBI Taxonomy" id="10090"/>
    <lineage>
        <taxon>Eukaryota</taxon>
        <taxon>Metazoa</taxon>
        <taxon>Chordata</taxon>
        <taxon>Craniata</taxon>
        <taxon>Vertebrata</taxon>
        <taxon>Euteleostomi</taxon>
        <taxon>Mammalia</taxon>
        <taxon>Eutheria</taxon>
        <taxon>Euarchontoglires</taxon>
        <taxon>Glires</taxon>
        <taxon>Rodentia</taxon>
        <taxon>Myomorpha</taxon>
        <taxon>Muroidea</taxon>
        <taxon>Muridae</taxon>
        <taxon>Murinae</taxon>
        <taxon>Mus</taxon>
        <taxon>Mus</taxon>
    </lineage>
</organism>
<dbReference type="EMBL" id="AK003354">
    <property type="protein sequence ID" value="BAB22732.1"/>
    <property type="molecule type" value="mRNA"/>
</dbReference>
<dbReference type="EMBL" id="AK009755">
    <property type="protein sequence ID" value="BAB26480.1"/>
    <property type="molecule type" value="mRNA"/>
</dbReference>
<dbReference type="EMBL" id="BC002128">
    <property type="protein sequence ID" value="AAH02128.1"/>
    <property type="molecule type" value="mRNA"/>
</dbReference>
<dbReference type="CCDS" id="CCDS39596.1"/>
<dbReference type="RefSeq" id="NP_077168.2">
    <property type="nucleotide sequence ID" value="NM_024206.4"/>
</dbReference>
<dbReference type="SMR" id="Q9D1M0"/>
<dbReference type="BioGRID" id="225548">
    <property type="interactions" value="39"/>
</dbReference>
<dbReference type="ComplexPortal" id="CPX-4474">
    <property type="entry name" value="Nuclear pore complex"/>
</dbReference>
<dbReference type="FunCoup" id="Q9D1M0">
    <property type="interactions" value="3767"/>
</dbReference>
<dbReference type="IntAct" id="Q9D1M0">
    <property type="interactions" value="6"/>
</dbReference>
<dbReference type="MINT" id="Q9D1M0"/>
<dbReference type="STRING" id="10090.ENSMUSP00000032440"/>
<dbReference type="GlyGen" id="Q9D1M0">
    <property type="glycosylation" value="1 site, 1 O-linked glycan (1 site)"/>
</dbReference>
<dbReference type="iPTMnet" id="Q9D1M0"/>
<dbReference type="PhosphoSitePlus" id="Q9D1M0"/>
<dbReference type="SwissPalm" id="Q9D1M0"/>
<dbReference type="REPRODUCTION-2DPAGE" id="Q9D1M0"/>
<dbReference type="jPOST" id="Q9D1M0"/>
<dbReference type="PaxDb" id="10090-ENSMUSP00000032440"/>
<dbReference type="PeptideAtlas" id="Q9D1M0"/>
<dbReference type="ProteomicsDB" id="261144"/>
<dbReference type="Pumba" id="Q9D1M0"/>
<dbReference type="Antibodypedia" id="25962">
    <property type="antibodies" value="245 antibodies from 35 providers"/>
</dbReference>
<dbReference type="DNASU" id="110379"/>
<dbReference type="Ensembl" id="ENSMUST00000032440.6">
    <property type="protein sequence ID" value="ENSMUSP00000032440.5"/>
    <property type="gene ID" value="ENSMUSG00000030298.11"/>
</dbReference>
<dbReference type="GeneID" id="110379"/>
<dbReference type="KEGG" id="mmu:110379"/>
<dbReference type="UCSC" id="uc009dhm.1">
    <property type="organism name" value="mouse"/>
</dbReference>
<dbReference type="AGR" id="MGI:99832"/>
<dbReference type="CTD" id="6396"/>
<dbReference type="MGI" id="MGI:99832">
    <property type="gene designation" value="Sec13"/>
</dbReference>
<dbReference type="VEuPathDB" id="HostDB:ENSMUSG00000030298"/>
<dbReference type="eggNOG" id="KOG1332">
    <property type="taxonomic scope" value="Eukaryota"/>
</dbReference>
<dbReference type="GeneTree" id="ENSGT00940000153393"/>
<dbReference type="HOGENOM" id="CLU_032441_0_1_1"/>
<dbReference type="InParanoid" id="Q9D1M0"/>
<dbReference type="OMA" id="IWKEEGD"/>
<dbReference type="OrthoDB" id="364224at2759"/>
<dbReference type="PhylomeDB" id="Q9D1M0"/>
<dbReference type="TreeFam" id="TF300815"/>
<dbReference type="Reactome" id="R-MMU-141444">
    <property type="pathway name" value="Amplification of signal from unattached kinetochores via a MAD2 inhibitory signal"/>
</dbReference>
<dbReference type="Reactome" id="R-MMU-159227">
    <property type="pathway name" value="Transport of the SLBP independent Mature mRNA"/>
</dbReference>
<dbReference type="Reactome" id="R-MMU-159230">
    <property type="pathway name" value="Transport of the SLBP Dependant Mature mRNA"/>
</dbReference>
<dbReference type="Reactome" id="R-MMU-159231">
    <property type="pathway name" value="Transport of Mature mRNA Derived from an Intronless Transcript"/>
</dbReference>
<dbReference type="Reactome" id="R-MMU-159236">
    <property type="pathway name" value="Transport of Mature mRNA derived from an Intron-Containing Transcript"/>
</dbReference>
<dbReference type="Reactome" id="R-MMU-170822">
    <property type="pathway name" value="Regulation of Glucokinase by Glucokinase Regulatory Protein"/>
</dbReference>
<dbReference type="Reactome" id="R-MMU-191859">
    <property type="pathway name" value="snRNP Assembly"/>
</dbReference>
<dbReference type="Reactome" id="R-MMU-204005">
    <property type="pathway name" value="COPII-mediated vesicle transport"/>
</dbReference>
<dbReference type="Reactome" id="R-MMU-2132295">
    <property type="pathway name" value="MHC class II antigen presentation"/>
</dbReference>
<dbReference type="Reactome" id="R-MMU-2467813">
    <property type="pathway name" value="Separation of Sister Chromatids"/>
</dbReference>
<dbReference type="Reactome" id="R-MMU-2500257">
    <property type="pathway name" value="Resolution of Sister Chromatid Cohesion"/>
</dbReference>
<dbReference type="Reactome" id="R-MMU-3108214">
    <property type="pathway name" value="SUMOylation of DNA damage response and repair proteins"/>
</dbReference>
<dbReference type="Reactome" id="R-MMU-3232142">
    <property type="pathway name" value="SUMOylation of ubiquitinylation proteins"/>
</dbReference>
<dbReference type="Reactome" id="R-MMU-3301854">
    <property type="pathway name" value="Nuclear Pore Complex (NPC) Disassembly"/>
</dbReference>
<dbReference type="Reactome" id="R-MMU-3371453">
    <property type="pathway name" value="Regulation of HSF1-mediated heat shock response"/>
</dbReference>
<dbReference type="Reactome" id="R-MMU-4085377">
    <property type="pathway name" value="SUMOylation of SUMOylation proteins"/>
</dbReference>
<dbReference type="Reactome" id="R-MMU-4551638">
    <property type="pathway name" value="SUMOylation of chromatin organization proteins"/>
</dbReference>
<dbReference type="Reactome" id="R-MMU-4570464">
    <property type="pathway name" value="SUMOylation of RNA binding proteins"/>
</dbReference>
<dbReference type="Reactome" id="R-MMU-5578749">
    <property type="pathway name" value="Transcriptional regulation by small RNAs"/>
</dbReference>
<dbReference type="Reactome" id="R-MMU-5663220">
    <property type="pathway name" value="RHO GTPases Activate Formins"/>
</dbReference>
<dbReference type="Reactome" id="R-MMU-68877">
    <property type="pathway name" value="Mitotic Prometaphase"/>
</dbReference>
<dbReference type="Reactome" id="R-MMU-9615933">
    <property type="pathway name" value="Postmitotic nuclear pore complex (NPC) reformation"/>
</dbReference>
<dbReference type="Reactome" id="R-MMU-9639288">
    <property type="pathway name" value="Amino acids regulate mTORC1"/>
</dbReference>
<dbReference type="Reactome" id="R-MMU-9648025">
    <property type="pathway name" value="EML4 and NUDC in mitotic spindle formation"/>
</dbReference>
<dbReference type="Reactome" id="R-MMU-983170">
    <property type="pathway name" value="Antigen Presentation: Folding, assembly and peptide loading of class I MHC"/>
</dbReference>
<dbReference type="BioGRID-ORCS" id="110379">
    <property type="hits" value="30 hits in 79 CRISPR screens"/>
</dbReference>
<dbReference type="ChiTaRS" id="Sec13">
    <property type="organism name" value="mouse"/>
</dbReference>
<dbReference type="PRO" id="PR:Q9D1M0"/>
<dbReference type="Proteomes" id="UP000000589">
    <property type="component" value="Chromosome 6"/>
</dbReference>
<dbReference type="RNAct" id="Q9D1M0">
    <property type="molecule type" value="protein"/>
</dbReference>
<dbReference type="Bgee" id="ENSMUSG00000030298">
    <property type="expression patterns" value="Expressed in humerus cartilage element and 278 other cell types or tissues"/>
</dbReference>
<dbReference type="GO" id="GO:0030127">
    <property type="term" value="C:COPII vesicle coat"/>
    <property type="evidence" value="ECO:0007669"/>
    <property type="project" value="Ensembl"/>
</dbReference>
<dbReference type="GO" id="GO:0005783">
    <property type="term" value="C:endoplasmic reticulum"/>
    <property type="evidence" value="ECO:0000266"/>
    <property type="project" value="MGI"/>
</dbReference>
<dbReference type="GO" id="GO:0005789">
    <property type="term" value="C:endoplasmic reticulum membrane"/>
    <property type="evidence" value="ECO:0007669"/>
    <property type="project" value="UniProtKB-SubCell"/>
</dbReference>
<dbReference type="GO" id="GO:0061700">
    <property type="term" value="C:GATOR2 complex"/>
    <property type="evidence" value="ECO:0000250"/>
    <property type="project" value="UniProtKB"/>
</dbReference>
<dbReference type="GO" id="GO:0000776">
    <property type="term" value="C:kinetochore"/>
    <property type="evidence" value="ECO:0007669"/>
    <property type="project" value="Ensembl"/>
</dbReference>
<dbReference type="GO" id="GO:0005765">
    <property type="term" value="C:lysosomal membrane"/>
    <property type="evidence" value="ECO:0000250"/>
    <property type="project" value="UniProtKB"/>
</dbReference>
<dbReference type="GO" id="GO:0005635">
    <property type="term" value="C:nuclear envelope"/>
    <property type="evidence" value="ECO:0000266"/>
    <property type="project" value="ComplexPortal"/>
</dbReference>
<dbReference type="GO" id="GO:0005643">
    <property type="term" value="C:nuclear pore"/>
    <property type="evidence" value="ECO:0000303"/>
    <property type="project" value="ComplexPortal"/>
</dbReference>
<dbReference type="GO" id="GO:0031080">
    <property type="term" value="C:nuclear pore outer ring"/>
    <property type="evidence" value="ECO:0000250"/>
    <property type="project" value="UniProtKB"/>
</dbReference>
<dbReference type="GO" id="GO:0005654">
    <property type="term" value="C:nucleoplasm"/>
    <property type="evidence" value="ECO:0007669"/>
    <property type="project" value="Ensembl"/>
</dbReference>
<dbReference type="GO" id="GO:0042802">
    <property type="term" value="F:identical protein binding"/>
    <property type="evidence" value="ECO:0007669"/>
    <property type="project" value="Ensembl"/>
</dbReference>
<dbReference type="GO" id="GO:0005198">
    <property type="term" value="F:structural molecule activity"/>
    <property type="evidence" value="ECO:0007669"/>
    <property type="project" value="InterPro"/>
</dbReference>
<dbReference type="GO" id="GO:0031669">
    <property type="term" value="P:cellular response to nutrient levels"/>
    <property type="evidence" value="ECO:0000250"/>
    <property type="project" value="UniProtKB"/>
</dbReference>
<dbReference type="GO" id="GO:0090110">
    <property type="term" value="P:COPII-coated vesicle cargo loading"/>
    <property type="evidence" value="ECO:0007669"/>
    <property type="project" value="Ensembl"/>
</dbReference>
<dbReference type="GO" id="GO:0006888">
    <property type="term" value="P:endoplasmic reticulum to Golgi vesicle-mediated transport"/>
    <property type="evidence" value="ECO:0000266"/>
    <property type="project" value="MGI"/>
</dbReference>
<dbReference type="GO" id="GO:0051028">
    <property type="term" value="P:mRNA transport"/>
    <property type="evidence" value="ECO:0007669"/>
    <property type="project" value="UniProtKB-KW"/>
</dbReference>
<dbReference type="GO" id="GO:0006913">
    <property type="term" value="P:nucleocytoplasmic transport"/>
    <property type="evidence" value="ECO:0000303"/>
    <property type="project" value="ComplexPortal"/>
</dbReference>
<dbReference type="GO" id="GO:1904263">
    <property type="term" value="P:positive regulation of TORC1 signaling"/>
    <property type="evidence" value="ECO:0000250"/>
    <property type="project" value="UniProtKB"/>
</dbReference>
<dbReference type="GO" id="GO:0032527">
    <property type="term" value="P:protein exit from endoplasmic reticulum"/>
    <property type="evidence" value="ECO:0000315"/>
    <property type="project" value="UniProtKB"/>
</dbReference>
<dbReference type="GO" id="GO:0072659">
    <property type="term" value="P:protein localization to plasma membrane"/>
    <property type="evidence" value="ECO:0000250"/>
    <property type="project" value="UniProtKB"/>
</dbReference>
<dbReference type="FunFam" id="2.130.10.10:FF:000017">
    <property type="entry name" value="SEC13 homolog (S. cerevisiae)"/>
    <property type="match status" value="1"/>
</dbReference>
<dbReference type="Gene3D" id="2.130.10.10">
    <property type="entry name" value="YVTN repeat-like/Quinoprotein amine dehydrogenase"/>
    <property type="match status" value="1"/>
</dbReference>
<dbReference type="InterPro" id="IPR037363">
    <property type="entry name" value="Sec13/Seh1_fam"/>
</dbReference>
<dbReference type="InterPro" id="IPR015943">
    <property type="entry name" value="WD40/YVTN_repeat-like_dom_sf"/>
</dbReference>
<dbReference type="InterPro" id="IPR036322">
    <property type="entry name" value="WD40_repeat_dom_sf"/>
</dbReference>
<dbReference type="InterPro" id="IPR001680">
    <property type="entry name" value="WD40_rpt"/>
</dbReference>
<dbReference type="PANTHER" id="PTHR11024">
    <property type="entry name" value="NUCLEAR PORE COMPLEX PROTEIN SEC13 / SEH1 FAMILY MEMBER"/>
    <property type="match status" value="1"/>
</dbReference>
<dbReference type="PANTHER" id="PTHR11024:SF2">
    <property type="entry name" value="PROTEIN SEC13 HOMOLOG"/>
    <property type="match status" value="1"/>
</dbReference>
<dbReference type="Pfam" id="PF00400">
    <property type="entry name" value="WD40"/>
    <property type="match status" value="5"/>
</dbReference>
<dbReference type="SMART" id="SM00320">
    <property type="entry name" value="WD40"/>
    <property type="match status" value="6"/>
</dbReference>
<dbReference type="SUPFAM" id="SSF50978">
    <property type="entry name" value="WD40 repeat-like"/>
    <property type="match status" value="1"/>
</dbReference>
<dbReference type="PROSITE" id="PS50082">
    <property type="entry name" value="WD_REPEATS_2"/>
    <property type="match status" value="3"/>
</dbReference>
<dbReference type="PROSITE" id="PS50294">
    <property type="entry name" value="WD_REPEATS_REGION"/>
    <property type="match status" value="1"/>
</dbReference>
<protein>
    <recommendedName>
        <fullName evidence="3">Protein SEC13 homolog</fullName>
    </recommendedName>
    <alternativeName>
        <fullName evidence="3">GATOR2 complex protein SEC13</fullName>
    </alternativeName>
    <alternativeName>
        <fullName>SEC13-like protein 1</fullName>
    </alternativeName>
    <alternativeName>
        <fullName>SEC13-related protein</fullName>
    </alternativeName>
</protein>